<proteinExistence type="inferred from homology"/>
<name>Y145_MYCPN</name>
<gene>
    <name type="ordered locus">MPN_145</name>
    <name type="ORF">E07_orf179</name>
    <name type="ORF">MP009</name>
</gene>
<organism>
    <name type="scientific">Mycoplasma pneumoniae (strain ATCC 29342 / M129 / Subtype 1)</name>
    <name type="common">Mycoplasmoides pneumoniae</name>
    <dbReference type="NCBI Taxonomy" id="272634"/>
    <lineage>
        <taxon>Bacteria</taxon>
        <taxon>Bacillati</taxon>
        <taxon>Mycoplasmatota</taxon>
        <taxon>Mycoplasmoidales</taxon>
        <taxon>Mycoplasmoidaceae</taxon>
        <taxon>Mycoplasmoides</taxon>
    </lineage>
</organism>
<reference key="1">
    <citation type="journal article" date="1996" name="Nucleic Acids Res.">
        <title>Complete sequence analysis of the genome of the bacterium Mycoplasma pneumoniae.</title>
        <authorList>
            <person name="Himmelreich R."/>
            <person name="Hilbert H."/>
            <person name="Plagens H."/>
            <person name="Pirkl E."/>
            <person name="Li B.-C."/>
            <person name="Herrmann R."/>
        </authorList>
    </citation>
    <scope>NUCLEOTIDE SEQUENCE [LARGE SCALE GENOMIC DNA]</scope>
    <source>
        <strain>ATCC 29342 / M129 / Subtype 1</strain>
    </source>
</reference>
<comment type="similarity">
    <text evidence="1">Belongs to the UPF0134 family.</text>
</comment>
<sequence length="179" mass="20533">MSYSPSLKEIIAILQKYTSKNYQSNCKTRPDGKLELSLNGVFEEIVKTPGKTRYVTHKQLDQKLKDFKQDLMVELHDTFATKTDLKESEARINQKLEALIQIVMVQGEQIKVHGEQINKLTQAVEKQGEKIEAQGQQIQKVNETLNFVVESLGSIHKRLDSMEGRLDSMENRLDKLESK</sequence>
<keyword id="KW-1185">Reference proteome</keyword>
<feature type="chain" id="PRO_0000221601" description="UPF0134 protein MPN_145">
    <location>
        <begin position="1"/>
        <end position="179"/>
    </location>
</feature>
<protein>
    <recommendedName>
        <fullName>UPF0134 protein MPN_145</fullName>
    </recommendedName>
</protein>
<dbReference type="EMBL" id="U00089">
    <property type="protein sequence ID" value="AAB95657.1"/>
    <property type="molecule type" value="Genomic_DNA"/>
</dbReference>
<dbReference type="PIR" id="S73335">
    <property type="entry name" value="S73335"/>
</dbReference>
<dbReference type="RefSeq" id="NP_109833.1">
    <property type="nucleotide sequence ID" value="NC_000912.1"/>
</dbReference>
<dbReference type="RefSeq" id="WP_010874502.1">
    <property type="nucleotide sequence ID" value="NC_000912.1"/>
</dbReference>
<dbReference type="SMR" id="P75141"/>
<dbReference type="STRING" id="272634.MPN_145"/>
<dbReference type="EnsemblBacteria" id="AAB95657">
    <property type="protein sequence ID" value="AAB95657"/>
    <property type="gene ID" value="MPN_145"/>
</dbReference>
<dbReference type="KEGG" id="mpn:MPN_145"/>
<dbReference type="PATRIC" id="fig|272634.6.peg.161"/>
<dbReference type="HOGENOM" id="CLU_089620_0_0_14"/>
<dbReference type="BioCyc" id="MPNE272634:G1GJ3-246-MONOMER"/>
<dbReference type="Proteomes" id="UP000000808">
    <property type="component" value="Chromosome"/>
</dbReference>
<dbReference type="Gene3D" id="6.10.250.40">
    <property type="match status" value="2"/>
</dbReference>
<dbReference type="InterPro" id="IPR002862">
    <property type="entry name" value="DUF16"/>
</dbReference>
<dbReference type="Pfam" id="PF01519">
    <property type="entry name" value="DUF16"/>
    <property type="match status" value="1"/>
</dbReference>
<dbReference type="SUPFAM" id="SSF144266">
    <property type="entry name" value="MPN010-like"/>
    <property type="match status" value="1"/>
</dbReference>
<evidence type="ECO:0000305" key="1"/>
<accession>P75141</accession>